<feature type="chain" id="PRO_0000150792" description="Olfactory receptor 52W1">
    <location>
        <begin position="1"/>
        <end position="320"/>
    </location>
</feature>
<feature type="topological domain" description="Extracellular" evidence="1">
    <location>
        <begin position="1"/>
        <end position="30"/>
    </location>
</feature>
<feature type="transmembrane region" description="Helical; Name=1" evidence="1">
    <location>
        <begin position="31"/>
        <end position="51"/>
    </location>
</feature>
<feature type="topological domain" description="Cytoplasmic" evidence="1">
    <location>
        <begin position="52"/>
        <end position="59"/>
    </location>
</feature>
<feature type="transmembrane region" description="Helical; Name=2" evidence="1">
    <location>
        <begin position="60"/>
        <end position="80"/>
    </location>
</feature>
<feature type="topological domain" description="Extracellular" evidence="1">
    <location>
        <begin position="81"/>
        <end position="104"/>
    </location>
</feature>
<feature type="transmembrane region" description="Helical; Name=3" evidence="1">
    <location>
        <begin position="105"/>
        <end position="125"/>
    </location>
</feature>
<feature type="topological domain" description="Cytoplasmic" evidence="1">
    <location>
        <begin position="126"/>
        <end position="144"/>
    </location>
</feature>
<feature type="transmembrane region" description="Helical; Name=4" evidence="1">
    <location>
        <begin position="145"/>
        <end position="165"/>
    </location>
</feature>
<feature type="topological domain" description="Extracellular" evidence="1">
    <location>
        <begin position="166"/>
        <end position="201"/>
    </location>
</feature>
<feature type="transmembrane region" description="Helical; Name=5" evidence="1">
    <location>
        <begin position="202"/>
        <end position="222"/>
    </location>
</feature>
<feature type="topological domain" description="Cytoplasmic" evidence="1">
    <location>
        <begin position="223"/>
        <end position="242"/>
    </location>
</feature>
<feature type="transmembrane region" description="Helical; Name=6" evidence="1">
    <location>
        <begin position="243"/>
        <end position="263"/>
    </location>
</feature>
<feature type="topological domain" description="Extracellular" evidence="1">
    <location>
        <begin position="264"/>
        <end position="279"/>
    </location>
</feature>
<feature type="transmembrane region" description="Helical; Name=7" evidence="1">
    <location>
        <begin position="280"/>
        <end position="300"/>
    </location>
</feature>
<feature type="topological domain" description="Cytoplasmic" evidence="1">
    <location>
        <begin position="301"/>
        <end position="320"/>
    </location>
</feature>
<feature type="glycosylation site" description="N-linked (GlcNAc...) asparagine" evidence="1">
    <location>
        <position position="8"/>
    </location>
</feature>
<feature type="sequence variant" id="VAR_044514" description="In dbSNP:rs10839531.">
    <original>H</original>
    <variation>R</variation>
    <location>
        <position position="239"/>
    </location>
</feature>
<feature type="sequence variant" id="VAR_044515" description="In dbSNP:rs11040799.">
    <original>L</original>
    <variation>Q</variation>
    <location>
        <position position="254"/>
    </location>
</feature>
<feature type="sequence variant" id="VAR_044516" description="In dbSNP:rs325609." evidence="3">
    <original>T</original>
    <variation>A</variation>
    <location>
        <position position="266"/>
    </location>
</feature>
<organism>
    <name type="scientific">Homo sapiens</name>
    <name type="common">Human</name>
    <dbReference type="NCBI Taxonomy" id="9606"/>
    <lineage>
        <taxon>Eukaryota</taxon>
        <taxon>Metazoa</taxon>
        <taxon>Chordata</taxon>
        <taxon>Craniata</taxon>
        <taxon>Vertebrata</taxon>
        <taxon>Euteleostomi</taxon>
        <taxon>Mammalia</taxon>
        <taxon>Eutheria</taxon>
        <taxon>Euarchontoglires</taxon>
        <taxon>Primates</taxon>
        <taxon>Haplorrhini</taxon>
        <taxon>Catarrhini</taxon>
        <taxon>Hominidae</taxon>
        <taxon>Homo</taxon>
    </lineage>
</organism>
<gene>
    <name type="primary">OR52W1</name>
    <name type="synonym">OR52W1P</name>
</gene>
<sequence length="320" mass="34414">MAETLQLNSTFLHPNFFILTGFPGLGSAQTWLTLVFGPIYLLALLGNGALPAVVWIDSTLHQPMFLLLAILAATDLGLATSIAPGLLAVLWLGPRSVPYAVCLVQMFFVHALTAMESGVLLAMACDRAAAIGRPLHYPVLVTKACVGYAALALALKAVAIVVPFPLLVAKFEHFQAKTIGHTYCAHMAVVELVVGNTQATNLYGLALSLAISGMDILGITGSYGLIAHAVLQLPTREAHAKAFGTCSSHICVILAFYIPGLFSYLTHRFGHHTVPKPVHILLSNIYLLLPPALNPLIYGARTKQIRDRLLETFTFRKSPL</sequence>
<evidence type="ECO:0000255" key="1"/>
<evidence type="ECO:0000255" key="2">
    <source>
        <dbReference type="PROSITE-ProRule" id="PRU00521"/>
    </source>
</evidence>
<evidence type="ECO:0000269" key="3">
    <source>
    </source>
</evidence>
<evidence type="ECO:0000305" key="4"/>
<dbReference type="EMBL" id="AB065511">
    <property type="protein sequence ID" value="BAC05759.1"/>
    <property type="molecule type" value="Genomic_DNA"/>
</dbReference>
<dbReference type="EMBL" id="AC036216">
    <property type="status" value="NOT_ANNOTATED_CDS"/>
    <property type="molecule type" value="Genomic_DNA"/>
</dbReference>
<dbReference type="EMBL" id="BC137225">
    <property type="protein sequence ID" value="AAI37226.1"/>
    <property type="molecule type" value="mRNA"/>
</dbReference>
<dbReference type="EMBL" id="BK004399">
    <property type="protein sequence ID" value="DAA04797.1"/>
    <property type="molecule type" value="Genomic_DNA"/>
</dbReference>
<dbReference type="CCDS" id="CCDS31407.1"/>
<dbReference type="RefSeq" id="NP_001005178.1">
    <property type="nucleotide sequence ID" value="NM_001005178.1"/>
</dbReference>
<dbReference type="SMR" id="Q6IF63"/>
<dbReference type="BioGRID" id="125694">
    <property type="interactions" value="3"/>
</dbReference>
<dbReference type="FunCoup" id="Q6IF63">
    <property type="interactions" value="445"/>
</dbReference>
<dbReference type="IntAct" id="Q6IF63">
    <property type="interactions" value="1"/>
</dbReference>
<dbReference type="STRING" id="9606.ENSP00000309673"/>
<dbReference type="GlyCosmos" id="Q6IF63">
    <property type="glycosylation" value="1 site, No reported glycans"/>
</dbReference>
<dbReference type="GlyGen" id="Q6IF63">
    <property type="glycosylation" value="1 site"/>
</dbReference>
<dbReference type="iPTMnet" id="Q6IF63"/>
<dbReference type="PhosphoSitePlus" id="Q6IF63"/>
<dbReference type="BioMuta" id="OR52W1"/>
<dbReference type="DMDM" id="205525921"/>
<dbReference type="PaxDb" id="9606-ENSP00000309673"/>
<dbReference type="PeptideAtlas" id="Q6IF63"/>
<dbReference type="Antibodypedia" id="57976">
    <property type="antibodies" value="54 antibodies from 16 providers"/>
</dbReference>
<dbReference type="DNASU" id="120787"/>
<dbReference type="Ensembl" id="ENST00000311352.3">
    <property type="protein sequence ID" value="ENSP00000309673.2"/>
    <property type="gene ID" value="ENSG00000175485.3"/>
</dbReference>
<dbReference type="GeneID" id="120787"/>
<dbReference type="KEGG" id="hsa:120787"/>
<dbReference type="MANE-Select" id="ENST00000311352.3">
    <property type="protein sequence ID" value="ENSP00000309673.2"/>
    <property type="RefSeq nucleotide sequence ID" value="NM_001005178.1"/>
    <property type="RefSeq protein sequence ID" value="NP_001005178.1"/>
</dbReference>
<dbReference type="UCSC" id="uc010qzz.3">
    <property type="organism name" value="human"/>
</dbReference>
<dbReference type="AGR" id="HGNC:15239"/>
<dbReference type="CTD" id="120787"/>
<dbReference type="GeneCards" id="OR52W1"/>
<dbReference type="HGNC" id="HGNC:15239">
    <property type="gene designation" value="OR52W1"/>
</dbReference>
<dbReference type="HPA" id="ENSG00000175485">
    <property type="expression patterns" value="Not detected"/>
</dbReference>
<dbReference type="neXtProt" id="NX_Q6IF63"/>
<dbReference type="OpenTargets" id="ENSG00000175485"/>
<dbReference type="PharmGKB" id="PA32453"/>
<dbReference type="VEuPathDB" id="HostDB:ENSG00000175485"/>
<dbReference type="eggNOG" id="ENOG502T9KV">
    <property type="taxonomic scope" value="Eukaryota"/>
</dbReference>
<dbReference type="GeneTree" id="ENSGT01130000278320"/>
<dbReference type="HOGENOM" id="CLU_012526_0_0_1"/>
<dbReference type="InParanoid" id="Q6IF63"/>
<dbReference type="OMA" id="DHAYCAH"/>
<dbReference type="OrthoDB" id="9829921at2759"/>
<dbReference type="PAN-GO" id="Q6IF63">
    <property type="GO annotations" value="0 GO annotations based on evolutionary models"/>
</dbReference>
<dbReference type="PhylomeDB" id="Q6IF63"/>
<dbReference type="TreeFam" id="TF343679"/>
<dbReference type="PathwayCommons" id="Q6IF63"/>
<dbReference type="Reactome" id="R-HSA-9752946">
    <property type="pathway name" value="Expression and translocation of olfactory receptors"/>
</dbReference>
<dbReference type="SignaLink" id="Q6IF63"/>
<dbReference type="BioGRID-ORCS" id="120787">
    <property type="hits" value="10 hits in 751 CRISPR screens"/>
</dbReference>
<dbReference type="GeneWiki" id="OR52W1"/>
<dbReference type="GenomeRNAi" id="120787"/>
<dbReference type="Pharos" id="Q6IF63">
    <property type="development level" value="Tdark"/>
</dbReference>
<dbReference type="PRO" id="PR:Q6IF63"/>
<dbReference type="Proteomes" id="UP000005640">
    <property type="component" value="Chromosome 11"/>
</dbReference>
<dbReference type="RNAct" id="Q6IF63">
    <property type="molecule type" value="protein"/>
</dbReference>
<dbReference type="Bgee" id="ENSG00000175485">
    <property type="expression patterns" value="Expressed in prefrontal cortex and 3 other cell types or tissues"/>
</dbReference>
<dbReference type="GO" id="GO:0005886">
    <property type="term" value="C:plasma membrane"/>
    <property type="evidence" value="ECO:0000318"/>
    <property type="project" value="GO_Central"/>
</dbReference>
<dbReference type="GO" id="GO:0004930">
    <property type="term" value="F:G protein-coupled receptor activity"/>
    <property type="evidence" value="ECO:0007669"/>
    <property type="project" value="UniProtKB-KW"/>
</dbReference>
<dbReference type="GO" id="GO:0004984">
    <property type="term" value="F:olfactory receptor activity"/>
    <property type="evidence" value="ECO:0000318"/>
    <property type="project" value="GO_Central"/>
</dbReference>
<dbReference type="FunFam" id="1.20.1070.10:FF:000006">
    <property type="entry name" value="Olfactory receptor"/>
    <property type="match status" value="1"/>
</dbReference>
<dbReference type="Gene3D" id="1.20.1070.10">
    <property type="entry name" value="Rhodopsin 7-helix transmembrane proteins"/>
    <property type="match status" value="1"/>
</dbReference>
<dbReference type="InterPro" id="IPR017452">
    <property type="entry name" value="GPCR_Rhodpsn_7TM"/>
</dbReference>
<dbReference type="InterPro" id="IPR000725">
    <property type="entry name" value="Olfact_rcpt"/>
</dbReference>
<dbReference type="InterPro" id="IPR050402">
    <property type="entry name" value="OR51/52/56-like"/>
</dbReference>
<dbReference type="PANTHER" id="PTHR26450:SF58">
    <property type="entry name" value="OLFACTORY RECEPTOR 52W1"/>
    <property type="match status" value="1"/>
</dbReference>
<dbReference type="PANTHER" id="PTHR26450">
    <property type="entry name" value="OLFACTORY RECEPTOR 56B1-RELATED"/>
    <property type="match status" value="1"/>
</dbReference>
<dbReference type="Pfam" id="PF13853">
    <property type="entry name" value="7tm_4"/>
    <property type="match status" value="1"/>
</dbReference>
<dbReference type="PRINTS" id="PR00245">
    <property type="entry name" value="OLFACTORYR"/>
</dbReference>
<dbReference type="SUPFAM" id="SSF81321">
    <property type="entry name" value="Family A G protein-coupled receptor-like"/>
    <property type="match status" value="1"/>
</dbReference>
<dbReference type="PROSITE" id="PS50262">
    <property type="entry name" value="G_PROTEIN_RECEP_F1_2"/>
    <property type="match status" value="1"/>
</dbReference>
<name>O52W1_HUMAN</name>
<protein>
    <recommendedName>
        <fullName>Olfactory receptor 52W1</fullName>
    </recommendedName>
    <alternativeName>
        <fullName>Olfactory receptor OR11-71</fullName>
    </alternativeName>
</protein>
<reference key="1">
    <citation type="submission" date="2001-07" db="EMBL/GenBank/DDBJ databases">
        <title>Genome-wide discovery and analysis of human seven transmembrane helix receptor genes.</title>
        <authorList>
            <person name="Suwa M."/>
            <person name="Sato T."/>
            <person name="Okouchi I."/>
            <person name="Arita M."/>
            <person name="Futami K."/>
            <person name="Matsumoto S."/>
            <person name="Tsutsumi S."/>
            <person name="Aburatani H."/>
            <person name="Asai K."/>
            <person name="Akiyama Y."/>
        </authorList>
    </citation>
    <scope>NUCLEOTIDE SEQUENCE [GENOMIC DNA]</scope>
</reference>
<reference key="2">
    <citation type="journal article" date="2006" name="Nature">
        <title>Human chromosome 11 DNA sequence and analysis including novel gene identification.</title>
        <authorList>
            <person name="Taylor T.D."/>
            <person name="Noguchi H."/>
            <person name="Totoki Y."/>
            <person name="Toyoda A."/>
            <person name="Kuroki Y."/>
            <person name="Dewar K."/>
            <person name="Lloyd C."/>
            <person name="Itoh T."/>
            <person name="Takeda T."/>
            <person name="Kim D.-W."/>
            <person name="She X."/>
            <person name="Barlow K.F."/>
            <person name="Bloom T."/>
            <person name="Bruford E."/>
            <person name="Chang J.L."/>
            <person name="Cuomo C.A."/>
            <person name="Eichler E."/>
            <person name="FitzGerald M.G."/>
            <person name="Jaffe D.B."/>
            <person name="LaButti K."/>
            <person name="Nicol R."/>
            <person name="Park H.-S."/>
            <person name="Seaman C."/>
            <person name="Sougnez C."/>
            <person name="Yang X."/>
            <person name="Zimmer A.R."/>
            <person name="Zody M.C."/>
            <person name="Birren B.W."/>
            <person name="Nusbaum C."/>
            <person name="Fujiyama A."/>
            <person name="Hattori M."/>
            <person name="Rogers J."/>
            <person name="Lander E.S."/>
            <person name="Sakaki Y."/>
        </authorList>
    </citation>
    <scope>NUCLEOTIDE SEQUENCE [LARGE SCALE GENOMIC DNA]</scope>
    <scope>VARIANT ALA-266</scope>
</reference>
<reference key="3">
    <citation type="journal article" date="2004" name="Genome Res.">
        <title>The status, quality, and expansion of the NIH full-length cDNA project: the Mammalian Gene Collection (MGC).</title>
        <authorList>
            <consortium name="The MGC Project Team"/>
        </authorList>
    </citation>
    <scope>NUCLEOTIDE SEQUENCE [LARGE SCALE MRNA]</scope>
</reference>
<reference key="4">
    <citation type="journal article" date="2004" name="Proc. Natl. Acad. Sci. U.S.A.">
        <title>The human olfactory receptor gene family.</title>
        <authorList>
            <person name="Malnic B."/>
            <person name="Godfrey P.A."/>
            <person name="Buck L.B."/>
        </authorList>
    </citation>
    <scope>IDENTIFICATION</scope>
</reference>
<reference key="5">
    <citation type="journal article" date="2004" name="Proc. Natl. Acad. Sci. U.S.A.">
        <authorList>
            <person name="Malnic B."/>
            <person name="Godfrey P.A."/>
            <person name="Buck L.B."/>
        </authorList>
    </citation>
    <scope>ERRATUM OF PUBMED:14983052</scope>
</reference>
<proteinExistence type="evidence at transcript level"/>
<accession>Q6IF63</accession>
<accession>Q8NH78</accession>
<keyword id="KW-1003">Cell membrane</keyword>
<keyword id="KW-0297">G-protein coupled receptor</keyword>
<keyword id="KW-0325">Glycoprotein</keyword>
<keyword id="KW-0472">Membrane</keyword>
<keyword id="KW-0552">Olfaction</keyword>
<keyword id="KW-0675">Receptor</keyword>
<keyword id="KW-1185">Reference proteome</keyword>
<keyword id="KW-0716">Sensory transduction</keyword>
<keyword id="KW-0807">Transducer</keyword>
<keyword id="KW-0812">Transmembrane</keyword>
<keyword id="KW-1133">Transmembrane helix</keyword>
<comment type="function">
    <text evidence="4">Odorant receptor.</text>
</comment>
<comment type="subcellular location">
    <subcellularLocation>
        <location>Cell membrane</location>
        <topology>Multi-pass membrane protein</topology>
    </subcellularLocation>
</comment>
<comment type="similarity">
    <text evidence="2">Belongs to the G-protein coupled receptor 1 family.</text>
</comment>
<comment type="online information" name="Human Olfactory Receptor Data Exploratorium (HORDE)">
    <link uri="http://genome.weizmann.ac.il/horde/card/index/symbol:OR52W1"/>
</comment>